<name>SSRP_EDWI9</name>
<organism>
    <name type="scientific">Edwardsiella ictaluri (strain 93-146)</name>
    <dbReference type="NCBI Taxonomy" id="634503"/>
    <lineage>
        <taxon>Bacteria</taxon>
        <taxon>Pseudomonadati</taxon>
        <taxon>Pseudomonadota</taxon>
        <taxon>Gammaproteobacteria</taxon>
        <taxon>Enterobacterales</taxon>
        <taxon>Hafniaceae</taxon>
        <taxon>Edwardsiella</taxon>
    </lineage>
</organism>
<reference key="1">
    <citation type="submission" date="2009-03" db="EMBL/GenBank/DDBJ databases">
        <title>Complete genome sequence of Edwardsiella ictaluri 93-146.</title>
        <authorList>
            <person name="Williams M.L."/>
            <person name="Gillaspy A.F."/>
            <person name="Dyer D.W."/>
            <person name="Thune R.L."/>
            <person name="Waldbieser G.C."/>
            <person name="Schuster S.C."/>
            <person name="Gipson J."/>
            <person name="Zaitshik J."/>
            <person name="Landry C."/>
            <person name="Lawrence M.L."/>
        </authorList>
    </citation>
    <scope>NUCLEOTIDE SEQUENCE [LARGE SCALE GENOMIC DNA]</scope>
    <source>
        <strain>93-146</strain>
    </source>
</reference>
<accession>C5BAL3</accession>
<protein>
    <recommendedName>
        <fullName evidence="1">SsrA-binding protein</fullName>
    </recommendedName>
    <alternativeName>
        <fullName evidence="1">Small protein B</fullName>
    </alternativeName>
</protein>
<proteinExistence type="inferred from homology"/>
<gene>
    <name evidence="1" type="primary">smpB</name>
    <name type="ordered locus">NT01EI_3068</name>
</gene>
<sequence length="160" mass="18219">MTKKKAYKPGSATIAMNKRARHDYFIEEEFEAGLSLQGWEVKSLRAGKANISESYILLQNGEAFLFGATFTPLNVASSHVVCDPTRTRKLLLKERELASLFGSANRDGYTIVPLSLYWKNAWAKLKIGVAKGKKEHDKRDDIKTREWKQDKARIMKNANR</sequence>
<feature type="chain" id="PRO_1000201933" description="SsrA-binding protein">
    <location>
        <begin position="1"/>
        <end position="160"/>
    </location>
</feature>
<feature type="region of interest" description="Disordered" evidence="2">
    <location>
        <begin position="137"/>
        <end position="160"/>
    </location>
</feature>
<feature type="compositionally biased region" description="Basic and acidic residues" evidence="2">
    <location>
        <begin position="137"/>
        <end position="153"/>
    </location>
</feature>
<dbReference type="EMBL" id="CP001600">
    <property type="protein sequence ID" value="ACR70220.1"/>
    <property type="molecule type" value="Genomic_DNA"/>
</dbReference>
<dbReference type="RefSeq" id="WP_015872308.1">
    <property type="nucleotide sequence ID" value="NZ_CP169062.1"/>
</dbReference>
<dbReference type="SMR" id="C5BAL3"/>
<dbReference type="STRING" id="67780.B6E78_07205"/>
<dbReference type="GeneID" id="69539941"/>
<dbReference type="KEGG" id="eic:NT01EI_3068"/>
<dbReference type="HOGENOM" id="CLU_108953_3_0_6"/>
<dbReference type="OrthoDB" id="9805462at2"/>
<dbReference type="Proteomes" id="UP000001485">
    <property type="component" value="Chromosome"/>
</dbReference>
<dbReference type="GO" id="GO:0005829">
    <property type="term" value="C:cytosol"/>
    <property type="evidence" value="ECO:0007669"/>
    <property type="project" value="TreeGrafter"/>
</dbReference>
<dbReference type="GO" id="GO:0003723">
    <property type="term" value="F:RNA binding"/>
    <property type="evidence" value="ECO:0007669"/>
    <property type="project" value="UniProtKB-UniRule"/>
</dbReference>
<dbReference type="GO" id="GO:0070929">
    <property type="term" value="P:trans-translation"/>
    <property type="evidence" value="ECO:0007669"/>
    <property type="project" value="UniProtKB-UniRule"/>
</dbReference>
<dbReference type="CDD" id="cd09294">
    <property type="entry name" value="SmpB"/>
    <property type="match status" value="1"/>
</dbReference>
<dbReference type="Gene3D" id="2.40.280.10">
    <property type="match status" value="1"/>
</dbReference>
<dbReference type="HAMAP" id="MF_00023">
    <property type="entry name" value="SmpB"/>
    <property type="match status" value="1"/>
</dbReference>
<dbReference type="InterPro" id="IPR023620">
    <property type="entry name" value="SmpB"/>
</dbReference>
<dbReference type="InterPro" id="IPR000037">
    <property type="entry name" value="SsrA-bd_prot"/>
</dbReference>
<dbReference type="InterPro" id="IPR020081">
    <property type="entry name" value="SsrA-bd_prot_CS"/>
</dbReference>
<dbReference type="NCBIfam" id="NF003843">
    <property type="entry name" value="PRK05422.1"/>
    <property type="match status" value="1"/>
</dbReference>
<dbReference type="NCBIfam" id="TIGR00086">
    <property type="entry name" value="smpB"/>
    <property type="match status" value="1"/>
</dbReference>
<dbReference type="PANTHER" id="PTHR30308:SF2">
    <property type="entry name" value="SSRA-BINDING PROTEIN"/>
    <property type="match status" value="1"/>
</dbReference>
<dbReference type="PANTHER" id="PTHR30308">
    <property type="entry name" value="TMRNA-BINDING COMPONENT OF TRANS-TRANSLATION TAGGING COMPLEX"/>
    <property type="match status" value="1"/>
</dbReference>
<dbReference type="Pfam" id="PF01668">
    <property type="entry name" value="SmpB"/>
    <property type="match status" value="1"/>
</dbReference>
<dbReference type="SUPFAM" id="SSF74982">
    <property type="entry name" value="Small protein B (SmpB)"/>
    <property type="match status" value="1"/>
</dbReference>
<dbReference type="PROSITE" id="PS01317">
    <property type="entry name" value="SSRP"/>
    <property type="match status" value="1"/>
</dbReference>
<keyword id="KW-0963">Cytoplasm</keyword>
<keyword id="KW-0694">RNA-binding</keyword>
<evidence type="ECO:0000255" key="1">
    <source>
        <dbReference type="HAMAP-Rule" id="MF_00023"/>
    </source>
</evidence>
<evidence type="ECO:0000256" key="2">
    <source>
        <dbReference type="SAM" id="MobiDB-lite"/>
    </source>
</evidence>
<comment type="function">
    <text evidence="1">Required for rescue of stalled ribosomes mediated by trans-translation. Binds to transfer-messenger RNA (tmRNA), required for stable association of tmRNA with ribosomes. tmRNA and SmpB together mimic tRNA shape, replacing the anticodon stem-loop with SmpB. tmRNA is encoded by the ssrA gene; the 2 termini fold to resemble tRNA(Ala) and it encodes a 'tag peptide', a short internal open reading frame. During trans-translation Ala-aminoacylated tmRNA acts like a tRNA, entering the A-site of stalled ribosomes, displacing the stalled mRNA. The ribosome then switches to translate the ORF on the tmRNA; the nascent peptide is terminated with the 'tag peptide' encoded by the tmRNA and targeted for degradation. The ribosome is freed to recommence translation, which seems to be the essential function of trans-translation.</text>
</comment>
<comment type="subcellular location">
    <subcellularLocation>
        <location evidence="1">Cytoplasm</location>
    </subcellularLocation>
    <text evidence="1">The tmRNA-SmpB complex associates with stalled 70S ribosomes.</text>
</comment>
<comment type="similarity">
    <text evidence="1">Belongs to the SmpB family.</text>
</comment>